<accession>Q8D0U3</accession>
<accession>Q0WDC8</accession>
<accession>Q8ZD29</accession>
<comment type="function">
    <text evidence="1">Catalyzes the oxidation of erythronate-4-phosphate to 3-hydroxy-2-oxo-4-phosphonooxybutanoate.</text>
</comment>
<comment type="catalytic activity">
    <reaction evidence="1">
        <text>4-phospho-D-erythronate + NAD(+) = (R)-3-hydroxy-2-oxo-4-phosphooxybutanoate + NADH + H(+)</text>
        <dbReference type="Rhea" id="RHEA:18829"/>
        <dbReference type="ChEBI" id="CHEBI:15378"/>
        <dbReference type="ChEBI" id="CHEBI:57540"/>
        <dbReference type="ChEBI" id="CHEBI:57945"/>
        <dbReference type="ChEBI" id="CHEBI:58538"/>
        <dbReference type="ChEBI" id="CHEBI:58766"/>
        <dbReference type="EC" id="1.1.1.290"/>
    </reaction>
</comment>
<comment type="pathway">
    <text evidence="1">Cofactor biosynthesis; pyridoxine 5'-phosphate biosynthesis; pyridoxine 5'-phosphate from D-erythrose 4-phosphate: step 2/5.</text>
</comment>
<comment type="subunit">
    <text evidence="1">Homodimer.</text>
</comment>
<comment type="subcellular location">
    <subcellularLocation>
        <location evidence="1">Cytoplasm</location>
    </subcellularLocation>
</comment>
<comment type="similarity">
    <text evidence="1">Belongs to the D-isomer specific 2-hydroxyacid dehydrogenase family. PdxB subfamily.</text>
</comment>
<comment type="sequence caution" evidence="2">
    <conflict type="erroneous initiation">
        <sequence resource="EMBL-CDS" id="AAM85166"/>
    </conflict>
</comment>
<comment type="sequence caution" evidence="2">
    <conflict type="erroneous initiation">
        <sequence resource="EMBL-CDS" id="AAS62605"/>
    </conflict>
</comment>
<proteinExistence type="inferred from homology"/>
<feature type="chain" id="PRO_0000075996" description="Erythronate-4-phosphate dehydrogenase">
    <location>
        <begin position="1"/>
        <end position="375"/>
    </location>
</feature>
<feature type="active site" evidence="1">
    <location>
        <position position="208"/>
    </location>
</feature>
<feature type="active site" evidence="1">
    <location>
        <position position="237"/>
    </location>
</feature>
<feature type="active site" description="Proton donor" evidence="1">
    <location>
        <position position="254"/>
    </location>
</feature>
<feature type="binding site" evidence="1">
    <location>
        <position position="45"/>
    </location>
    <ligand>
        <name>substrate</name>
    </ligand>
</feature>
<feature type="binding site" evidence="1">
    <location>
        <position position="66"/>
    </location>
    <ligand>
        <name>substrate</name>
    </ligand>
</feature>
<feature type="binding site" evidence="1">
    <location>
        <position position="146"/>
    </location>
    <ligand>
        <name>NAD(+)</name>
        <dbReference type="ChEBI" id="CHEBI:57540"/>
    </ligand>
</feature>
<feature type="binding site" evidence="1">
    <location>
        <position position="175"/>
    </location>
    <ligand>
        <name>NAD(+)</name>
        <dbReference type="ChEBI" id="CHEBI:57540"/>
    </ligand>
</feature>
<feature type="binding site" evidence="1">
    <location>
        <position position="232"/>
    </location>
    <ligand>
        <name>NAD(+)</name>
        <dbReference type="ChEBI" id="CHEBI:57540"/>
    </ligand>
</feature>
<feature type="binding site" evidence="1">
    <location>
        <position position="257"/>
    </location>
    <ligand>
        <name>NAD(+)</name>
        <dbReference type="ChEBI" id="CHEBI:57540"/>
    </ligand>
</feature>
<feature type="binding site" evidence="1">
    <location>
        <position position="258"/>
    </location>
    <ligand>
        <name>substrate</name>
    </ligand>
</feature>
<sequence>MKILVDENMPYAEELFRRLGDVQAVPGRPIPRDALVDADALMVRSVTKVNEALLHGTSIGFVGTATAGTDHVDDTWLRQQGIGFSAAPGCNAIAVVEYVFSALMMMAERDGFQLRDKTVGIIGVGNVGSRLNARLQALGVRTLLCDPPRADRGDNEAFWPLEKLVREADVLTFHTPLNKTGAYQSLHMADDELLAALPDGRILINACRGAVVDNAALLRALEKGKKLSVVLDVWEPEPDLSLPLLARVDIGTPHIAGYTLEGKARGTTQVFEAFSQHLGQPQSVELASLLPVPEFSHLRLNGELDEGKLKRLMHLVYDVRRDDAPLRHVAGLPGEFDRLRKHYQERREWSSLCVQCDDATSAGLLQQLGFTTQLL</sequence>
<evidence type="ECO:0000255" key="1">
    <source>
        <dbReference type="HAMAP-Rule" id="MF_01825"/>
    </source>
</evidence>
<evidence type="ECO:0000305" key="2"/>
<protein>
    <recommendedName>
        <fullName evidence="1">Erythronate-4-phosphate dehydrogenase</fullName>
        <ecNumber evidence="1">1.1.1.290</ecNumber>
    </recommendedName>
</protein>
<dbReference type="EC" id="1.1.1.290" evidence="1"/>
<dbReference type="EMBL" id="AL590842">
    <property type="protein sequence ID" value="CAL21382.1"/>
    <property type="molecule type" value="Genomic_DNA"/>
</dbReference>
<dbReference type="EMBL" id="AE009952">
    <property type="protein sequence ID" value="AAM85166.1"/>
    <property type="status" value="ALT_INIT"/>
    <property type="molecule type" value="Genomic_DNA"/>
</dbReference>
<dbReference type="EMBL" id="AE017042">
    <property type="protein sequence ID" value="AAS62605.1"/>
    <property type="status" value="ALT_INIT"/>
    <property type="molecule type" value="Genomic_DNA"/>
</dbReference>
<dbReference type="PIR" id="AC0337">
    <property type="entry name" value="AC0337"/>
</dbReference>
<dbReference type="RefSeq" id="WP_002209725.1">
    <property type="nucleotide sequence ID" value="NZ_WUCM01000012.1"/>
</dbReference>
<dbReference type="RefSeq" id="YP_002347710.1">
    <property type="nucleotide sequence ID" value="NC_003143.1"/>
</dbReference>
<dbReference type="SMR" id="Q8D0U3"/>
<dbReference type="IntAct" id="Q8D0U3">
    <property type="interactions" value="3"/>
</dbReference>
<dbReference type="STRING" id="214092.YPO2763"/>
<dbReference type="PaxDb" id="214092-YPO2763"/>
<dbReference type="DNASU" id="1146544"/>
<dbReference type="EnsemblBacteria" id="AAS62605">
    <property type="protein sequence ID" value="AAS62605"/>
    <property type="gene ID" value="YP_2400"/>
</dbReference>
<dbReference type="GeneID" id="57975926"/>
<dbReference type="KEGG" id="ype:YPO2763"/>
<dbReference type="KEGG" id="ypk:y1597"/>
<dbReference type="KEGG" id="ypm:YP_2400"/>
<dbReference type="PATRIC" id="fig|1028802.3.peg.1132"/>
<dbReference type="eggNOG" id="COG0111">
    <property type="taxonomic scope" value="Bacteria"/>
</dbReference>
<dbReference type="HOGENOM" id="CLU_019796_4_0_6"/>
<dbReference type="OMA" id="SAPGCNA"/>
<dbReference type="OrthoDB" id="9770208at2"/>
<dbReference type="UniPathway" id="UPA00244">
    <property type="reaction ID" value="UER00310"/>
</dbReference>
<dbReference type="Proteomes" id="UP000000815">
    <property type="component" value="Chromosome"/>
</dbReference>
<dbReference type="Proteomes" id="UP000001019">
    <property type="component" value="Chromosome"/>
</dbReference>
<dbReference type="Proteomes" id="UP000002490">
    <property type="component" value="Chromosome"/>
</dbReference>
<dbReference type="GO" id="GO:0005829">
    <property type="term" value="C:cytosol"/>
    <property type="evidence" value="ECO:0000318"/>
    <property type="project" value="GO_Central"/>
</dbReference>
<dbReference type="GO" id="GO:0033711">
    <property type="term" value="F:4-phosphoerythronate dehydrogenase activity"/>
    <property type="evidence" value="ECO:0000318"/>
    <property type="project" value="GO_Central"/>
</dbReference>
<dbReference type="GO" id="GO:0051287">
    <property type="term" value="F:NAD binding"/>
    <property type="evidence" value="ECO:0007669"/>
    <property type="project" value="InterPro"/>
</dbReference>
<dbReference type="GO" id="GO:0046983">
    <property type="term" value="F:protein dimerization activity"/>
    <property type="evidence" value="ECO:0007669"/>
    <property type="project" value="InterPro"/>
</dbReference>
<dbReference type="GO" id="GO:0036001">
    <property type="term" value="P:'de novo' pyridoxal 5'-phosphate biosynthetic process"/>
    <property type="evidence" value="ECO:0000318"/>
    <property type="project" value="GO_Central"/>
</dbReference>
<dbReference type="GO" id="GO:0008615">
    <property type="term" value="P:pyridoxine biosynthetic process"/>
    <property type="evidence" value="ECO:0000318"/>
    <property type="project" value="GO_Central"/>
</dbReference>
<dbReference type="CDD" id="cd12158">
    <property type="entry name" value="ErythrP_dh"/>
    <property type="match status" value="1"/>
</dbReference>
<dbReference type="FunFam" id="3.30.1370.170:FF:000001">
    <property type="entry name" value="Erythronate-4-phosphate dehydrogenase"/>
    <property type="match status" value="1"/>
</dbReference>
<dbReference type="FunFam" id="3.40.50.720:FF:000093">
    <property type="entry name" value="Erythronate-4-phosphate dehydrogenase"/>
    <property type="match status" value="1"/>
</dbReference>
<dbReference type="Gene3D" id="3.30.1370.170">
    <property type="match status" value="1"/>
</dbReference>
<dbReference type="Gene3D" id="3.40.50.720">
    <property type="entry name" value="NAD(P)-binding Rossmann-like Domain"/>
    <property type="match status" value="2"/>
</dbReference>
<dbReference type="HAMAP" id="MF_01825">
    <property type="entry name" value="PdxB"/>
    <property type="match status" value="1"/>
</dbReference>
<dbReference type="InterPro" id="IPR006139">
    <property type="entry name" value="D-isomer_2_OHA_DH_cat_dom"/>
</dbReference>
<dbReference type="InterPro" id="IPR029753">
    <property type="entry name" value="D-isomer_DH_CS"/>
</dbReference>
<dbReference type="InterPro" id="IPR029752">
    <property type="entry name" value="D-isomer_DH_CS1"/>
</dbReference>
<dbReference type="InterPro" id="IPR006140">
    <property type="entry name" value="D-isomer_DH_NAD-bd"/>
</dbReference>
<dbReference type="InterPro" id="IPR020921">
    <property type="entry name" value="Erythronate-4-P_DHase"/>
</dbReference>
<dbReference type="InterPro" id="IPR024531">
    <property type="entry name" value="Erythronate-4-P_DHase_dimer"/>
</dbReference>
<dbReference type="InterPro" id="IPR036291">
    <property type="entry name" value="NAD(P)-bd_dom_sf"/>
</dbReference>
<dbReference type="InterPro" id="IPR038251">
    <property type="entry name" value="PdxB_dimer_sf"/>
</dbReference>
<dbReference type="NCBIfam" id="NF001309">
    <property type="entry name" value="PRK00257.1"/>
    <property type="match status" value="1"/>
</dbReference>
<dbReference type="PANTHER" id="PTHR42938">
    <property type="entry name" value="FORMATE DEHYDROGENASE 1"/>
    <property type="match status" value="1"/>
</dbReference>
<dbReference type="PANTHER" id="PTHR42938:SF9">
    <property type="entry name" value="FORMATE DEHYDROGENASE 1"/>
    <property type="match status" value="1"/>
</dbReference>
<dbReference type="Pfam" id="PF00389">
    <property type="entry name" value="2-Hacid_dh"/>
    <property type="match status" value="1"/>
</dbReference>
<dbReference type="Pfam" id="PF02826">
    <property type="entry name" value="2-Hacid_dh_C"/>
    <property type="match status" value="1"/>
</dbReference>
<dbReference type="Pfam" id="PF11890">
    <property type="entry name" value="DUF3410"/>
    <property type="match status" value="1"/>
</dbReference>
<dbReference type="SUPFAM" id="SSF52283">
    <property type="entry name" value="Formate/glycerate dehydrogenase catalytic domain-like"/>
    <property type="match status" value="1"/>
</dbReference>
<dbReference type="SUPFAM" id="SSF51735">
    <property type="entry name" value="NAD(P)-binding Rossmann-fold domains"/>
    <property type="match status" value="1"/>
</dbReference>
<dbReference type="PROSITE" id="PS00065">
    <property type="entry name" value="D_2_HYDROXYACID_DH_1"/>
    <property type="match status" value="1"/>
</dbReference>
<dbReference type="PROSITE" id="PS00671">
    <property type="entry name" value="D_2_HYDROXYACID_DH_3"/>
    <property type="match status" value="1"/>
</dbReference>
<organism>
    <name type="scientific">Yersinia pestis</name>
    <dbReference type="NCBI Taxonomy" id="632"/>
    <lineage>
        <taxon>Bacteria</taxon>
        <taxon>Pseudomonadati</taxon>
        <taxon>Pseudomonadota</taxon>
        <taxon>Gammaproteobacteria</taxon>
        <taxon>Enterobacterales</taxon>
        <taxon>Yersiniaceae</taxon>
        <taxon>Yersinia</taxon>
    </lineage>
</organism>
<name>PDXB_YERPE</name>
<reference key="1">
    <citation type="journal article" date="2001" name="Nature">
        <title>Genome sequence of Yersinia pestis, the causative agent of plague.</title>
        <authorList>
            <person name="Parkhill J."/>
            <person name="Wren B.W."/>
            <person name="Thomson N.R."/>
            <person name="Titball R.W."/>
            <person name="Holden M.T.G."/>
            <person name="Prentice M.B."/>
            <person name="Sebaihia M."/>
            <person name="James K.D."/>
            <person name="Churcher C.M."/>
            <person name="Mungall K.L."/>
            <person name="Baker S."/>
            <person name="Basham D."/>
            <person name="Bentley S.D."/>
            <person name="Brooks K."/>
            <person name="Cerdeno-Tarraga A.-M."/>
            <person name="Chillingworth T."/>
            <person name="Cronin A."/>
            <person name="Davies R.M."/>
            <person name="Davis P."/>
            <person name="Dougan G."/>
            <person name="Feltwell T."/>
            <person name="Hamlin N."/>
            <person name="Holroyd S."/>
            <person name="Jagels K."/>
            <person name="Karlyshev A.V."/>
            <person name="Leather S."/>
            <person name="Moule S."/>
            <person name="Oyston P.C.F."/>
            <person name="Quail M.A."/>
            <person name="Rutherford K.M."/>
            <person name="Simmonds M."/>
            <person name="Skelton J."/>
            <person name="Stevens K."/>
            <person name="Whitehead S."/>
            <person name="Barrell B.G."/>
        </authorList>
    </citation>
    <scope>NUCLEOTIDE SEQUENCE [LARGE SCALE GENOMIC DNA]</scope>
    <source>
        <strain>CO-92 / Biovar Orientalis</strain>
    </source>
</reference>
<reference key="2">
    <citation type="journal article" date="2002" name="J. Bacteriol.">
        <title>Genome sequence of Yersinia pestis KIM.</title>
        <authorList>
            <person name="Deng W."/>
            <person name="Burland V."/>
            <person name="Plunkett G. III"/>
            <person name="Boutin A."/>
            <person name="Mayhew G.F."/>
            <person name="Liss P."/>
            <person name="Perna N.T."/>
            <person name="Rose D.J."/>
            <person name="Mau B."/>
            <person name="Zhou S."/>
            <person name="Schwartz D.C."/>
            <person name="Fetherston J.D."/>
            <person name="Lindler L.E."/>
            <person name="Brubaker R.R."/>
            <person name="Plano G.V."/>
            <person name="Straley S.C."/>
            <person name="McDonough K.A."/>
            <person name="Nilles M.L."/>
            <person name="Matson J.S."/>
            <person name="Blattner F.R."/>
            <person name="Perry R.D."/>
        </authorList>
    </citation>
    <scope>NUCLEOTIDE SEQUENCE [LARGE SCALE GENOMIC DNA]</scope>
    <source>
        <strain>KIM10+ / Biovar Mediaevalis</strain>
    </source>
</reference>
<reference key="3">
    <citation type="journal article" date="2004" name="DNA Res.">
        <title>Complete genome sequence of Yersinia pestis strain 91001, an isolate avirulent to humans.</title>
        <authorList>
            <person name="Song Y."/>
            <person name="Tong Z."/>
            <person name="Wang J."/>
            <person name="Wang L."/>
            <person name="Guo Z."/>
            <person name="Han Y."/>
            <person name="Zhang J."/>
            <person name="Pei D."/>
            <person name="Zhou D."/>
            <person name="Qin H."/>
            <person name="Pang X."/>
            <person name="Han Y."/>
            <person name="Zhai J."/>
            <person name="Li M."/>
            <person name="Cui B."/>
            <person name="Qi Z."/>
            <person name="Jin L."/>
            <person name="Dai R."/>
            <person name="Chen F."/>
            <person name="Li S."/>
            <person name="Ye C."/>
            <person name="Du Z."/>
            <person name="Lin W."/>
            <person name="Wang J."/>
            <person name="Yu J."/>
            <person name="Yang H."/>
            <person name="Wang J."/>
            <person name="Huang P."/>
            <person name="Yang R."/>
        </authorList>
    </citation>
    <scope>NUCLEOTIDE SEQUENCE [LARGE SCALE GENOMIC DNA]</scope>
    <source>
        <strain>91001 / Biovar Mediaevalis</strain>
    </source>
</reference>
<keyword id="KW-0963">Cytoplasm</keyword>
<keyword id="KW-0520">NAD</keyword>
<keyword id="KW-0560">Oxidoreductase</keyword>
<keyword id="KW-0664">Pyridoxine biosynthesis</keyword>
<keyword id="KW-1185">Reference proteome</keyword>
<gene>
    <name evidence="1" type="primary">pdxB</name>
    <name type="ordered locus">YPO2763</name>
    <name type="ordered locus">y1597</name>
    <name type="ordered locus">YP_2400</name>
</gene>